<name>QUEC_METMJ</name>
<feature type="chain" id="PRO_0000336967" description="7-cyano-7-deazaguanine synthase">
    <location>
        <begin position="1"/>
        <end position="222"/>
    </location>
</feature>
<feature type="binding site" evidence="1">
    <location>
        <begin position="8"/>
        <end position="18"/>
    </location>
    <ligand>
        <name>ATP</name>
        <dbReference type="ChEBI" id="CHEBI:30616"/>
    </ligand>
</feature>
<feature type="binding site" evidence="1">
    <location>
        <position position="188"/>
    </location>
    <ligand>
        <name>Zn(2+)</name>
        <dbReference type="ChEBI" id="CHEBI:29105"/>
    </ligand>
</feature>
<feature type="binding site" evidence="1">
    <location>
        <position position="196"/>
    </location>
    <ligand>
        <name>Zn(2+)</name>
        <dbReference type="ChEBI" id="CHEBI:29105"/>
    </ligand>
</feature>
<feature type="binding site" evidence="1">
    <location>
        <position position="199"/>
    </location>
    <ligand>
        <name>Zn(2+)</name>
        <dbReference type="ChEBI" id="CHEBI:29105"/>
    </ligand>
</feature>
<feature type="binding site" evidence="1">
    <location>
        <position position="202"/>
    </location>
    <ligand>
        <name>Zn(2+)</name>
        <dbReference type="ChEBI" id="CHEBI:29105"/>
    </ligand>
</feature>
<sequence length="222" mass="24601">MKKAVCLLSGGMDSTTLAYVAKDTGYDIVALHFTYGQRTEAKERECARAVAKNLDALDFVEISLEHFTKIGASSLTDTSIPVEEYAGEEEGVPSTYVPFRNANLLAIATSLAEARRAEAVFIGVQTGDYPGYPDCRPEFIEAFQRAVDLGTAAEPRIVLMTPFVRMSKVDIVRKGLALGVPYELTWSCYQNDDRACGVCSSCHYRREAFRELGLEDPIEYER</sequence>
<dbReference type="EC" id="6.3.4.20" evidence="1"/>
<dbReference type="EMBL" id="CP000562">
    <property type="protein sequence ID" value="ABN58133.1"/>
    <property type="molecule type" value="Genomic_DNA"/>
</dbReference>
<dbReference type="RefSeq" id="WP_011845042.1">
    <property type="nucleotide sequence ID" value="NC_009051.1"/>
</dbReference>
<dbReference type="SMR" id="A3CXN3"/>
<dbReference type="STRING" id="368407.Memar_2210"/>
<dbReference type="GeneID" id="4846613"/>
<dbReference type="GeneID" id="76730292"/>
<dbReference type="KEGG" id="mem:Memar_2210"/>
<dbReference type="eggNOG" id="arCOG00039">
    <property type="taxonomic scope" value="Archaea"/>
</dbReference>
<dbReference type="HOGENOM" id="CLU_081854_1_0_2"/>
<dbReference type="OrthoDB" id="6532at2157"/>
<dbReference type="UniPathway" id="UPA00391"/>
<dbReference type="Proteomes" id="UP000002146">
    <property type="component" value="Chromosome"/>
</dbReference>
<dbReference type="GO" id="GO:0005524">
    <property type="term" value="F:ATP binding"/>
    <property type="evidence" value="ECO:0007669"/>
    <property type="project" value="UniProtKB-UniRule"/>
</dbReference>
<dbReference type="GO" id="GO:0016879">
    <property type="term" value="F:ligase activity, forming carbon-nitrogen bonds"/>
    <property type="evidence" value="ECO:0007669"/>
    <property type="project" value="UniProtKB-UniRule"/>
</dbReference>
<dbReference type="GO" id="GO:0008270">
    <property type="term" value="F:zinc ion binding"/>
    <property type="evidence" value="ECO:0007669"/>
    <property type="project" value="UniProtKB-UniRule"/>
</dbReference>
<dbReference type="CDD" id="cd01995">
    <property type="entry name" value="QueC-like"/>
    <property type="match status" value="1"/>
</dbReference>
<dbReference type="Gene3D" id="3.40.50.620">
    <property type="entry name" value="HUPs"/>
    <property type="match status" value="1"/>
</dbReference>
<dbReference type="HAMAP" id="MF_01633">
    <property type="entry name" value="QueC"/>
    <property type="match status" value="1"/>
</dbReference>
<dbReference type="InterPro" id="IPR018317">
    <property type="entry name" value="QueC"/>
</dbReference>
<dbReference type="InterPro" id="IPR014729">
    <property type="entry name" value="Rossmann-like_a/b/a_fold"/>
</dbReference>
<dbReference type="NCBIfam" id="TIGR00364">
    <property type="entry name" value="7-cyano-7-deazaguanine synthase QueC"/>
    <property type="match status" value="1"/>
</dbReference>
<dbReference type="PANTHER" id="PTHR42914">
    <property type="entry name" value="7-CYANO-7-DEAZAGUANINE SYNTHASE"/>
    <property type="match status" value="1"/>
</dbReference>
<dbReference type="PANTHER" id="PTHR42914:SF1">
    <property type="entry name" value="7-CYANO-7-DEAZAGUANINE SYNTHASE"/>
    <property type="match status" value="1"/>
</dbReference>
<dbReference type="Pfam" id="PF06508">
    <property type="entry name" value="QueC"/>
    <property type="match status" value="1"/>
</dbReference>
<dbReference type="PIRSF" id="PIRSF006293">
    <property type="entry name" value="ExsB"/>
    <property type="match status" value="1"/>
</dbReference>
<dbReference type="SUPFAM" id="SSF52402">
    <property type="entry name" value="Adenine nucleotide alpha hydrolases-like"/>
    <property type="match status" value="1"/>
</dbReference>
<reference key="1">
    <citation type="journal article" date="2009" name="Stand. Genomic Sci.">
        <title>Complete genome sequence of Methanoculleus marisnigri Romesser et al. 1981 type strain JR1.</title>
        <authorList>
            <person name="Anderson I.J."/>
            <person name="Sieprawska-Lupa M."/>
            <person name="Lapidus A."/>
            <person name="Nolan M."/>
            <person name="Copeland A."/>
            <person name="Glavina Del Rio T."/>
            <person name="Tice H."/>
            <person name="Dalin E."/>
            <person name="Barry K."/>
            <person name="Saunders E."/>
            <person name="Han C."/>
            <person name="Brettin T."/>
            <person name="Detter J.C."/>
            <person name="Bruce D."/>
            <person name="Mikhailova N."/>
            <person name="Pitluck S."/>
            <person name="Hauser L."/>
            <person name="Land M."/>
            <person name="Lucas S."/>
            <person name="Richardson P."/>
            <person name="Whitman W.B."/>
            <person name="Kyrpides N.C."/>
        </authorList>
    </citation>
    <scope>NUCLEOTIDE SEQUENCE [LARGE SCALE GENOMIC DNA]</scope>
    <source>
        <strain>ATCC 35101 / DSM 1498 / JR1</strain>
    </source>
</reference>
<organism>
    <name type="scientific">Methanoculleus marisnigri (strain ATCC 35101 / DSM 1498 / JR1)</name>
    <dbReference type="NCBI Taxonomy" id="368407"/>
    <lineage>
        <taxon>Archaea</taxon>
        <taxon>Methanobacteriati</taxon>
        <taxon>Methanobacteriota</taxon>
        <taxon>Stenosarchaea group</taxon>
        <taxon>Methanomicrobia</taxon>
        <taxon>Methanomicrobiales</taxon>
        <taxon>Methanomicrobiaceae</taxon>
        <taxon>Methanoculleus</taxon>
    </lineage>
</organism>
<keyword id="KW-0067">ATP-binding</keyword>
<keyword id="KW-0436">Ligase</keyword>
<keyword id="KW-0479">Metal-binding</keyword>
<keyword id="KW-0547">Nucleotide-binding</keyword>
<keyword id="KW-0862">Zinc</keyword>
<protein>
    <recommendedName>
        <fullName evidence="1">7-cyano-7-deazaguanine synthase</fullName>
        <ecNumber evidence="1">6.3.4.20</ecNumber>
    </recommendedName>
    <alternativeName>
        <fullName evidence="1">7-cyano-7-carbaguanine synthase</fullName>
    </alternativeName>
    <alternativeName>
        <fullName evidence="1">Archaeosine biosynthesis protein QueC</fullName>
    </alternativeName>
    <alternativeName>
        <fullName evidence="1">PreQ(0) synthase</fullName>
    </alternativeName>
</protein>
<gene>
    <name evidence="1" type="primary">queC</name>
    <name type="ordered locus">Memar_2210</name>
</gene>
<accession>A3CXN3</accession>
<evidence type="ECO:0000255" key="1">
    <source>
        <dbReference type="HAMAP-Rule" id="MF_01633"/>
    </source>
</evidence>
<comment type="function">
    <text evidence="1">Catalyzes the ATP-dependent conversion of 7-carboxy-7-deazaguanine (CDG) to 7-cyano-7-deazaguanine (preQ(0)).</text>
</comment>
<comment type="catalytic activity">
    <reaction evidence="1">
        <text>7-carboxy-7-deazaguanine + NH4(+) + ATP = 7-cyano-7-deazaguanine + ADP + phosphate + H2O + H(+)</text>
        <dbReference type="Rhea" id="RHEA:27982"/>
        <dbReference type="ChEBI" id="CHEBI:15377"/>
        <dbReference type="ChEBI" id="CHEBI:15378"/>
        <dbReference type="ChEBI" id="CHEBI:28938"/>
        <dbReference type="ChEBI" id="CHEBI:30616"/>
        <dbReference type="ChEBI" id="CHEBI:43474"/>
        <dbReference type="ChEBI" id="CHEBI:45075"/>
        <dbReference type="ChEBI" id="CHEBI:61036"/>
        <dbReference type="ChEBI" id="CHEBI:456216"/>
        <dbReference type="EC" id="6.3.4.20"/>
    </reaction>
</comment>
<comment type="cofactor">
    <cofactor evidence="1">
        <name>Zn(2+)</name>
        <dbReference type="ChEBI" id="CHEBI:29105"/>
    </cofactor>
    <text evidence="1">Binds 1 zinc ion per subunit.</text>
</comment>
<comment type="pathway">
    <text evidence="1">Purine metabolism; 7-cyano-7-deazaguanine biosynthesis.</text>
</comment>
<comment type="similarity">
    <text evidence="1">Belongs to the QueC family.</text>
</comment>
<proteinExistence type="inferred from homology"/>